<feature type="chain" id="PRO_0000343814" description="UPF0056 inner membrane protein MarC">
    <location>
        <begin position="1"/>
        <end position="221"/>
    </location>
</feature>
<feature type="topological domain" description="Periplasmic" evidence="2">
    <location>
        <begin position="1"/>
        <end position="7"/>
    </location>
</feature>
<feature type="transmembrane region" description="Helical" evidence="2">
    <location>
        <begin position="8"/>
        <end position="28"/>
    </location>
</feature>
<feature type="topological domain" description="Cytoplasmic" evidence="2">
    <location>
        <begin position="29"/>
        <end position="44"/>
    </location>
</feature>
<feature type="transmembrane region" description="Helical" evidence="2">
    <location>
        <begin position="45"/>
        <end position="65"/>
    </location>
</feature>
<feature type="topological domain" description="Periplasmic" evidence="2">
    <location>
        <begin position="66"/>
        <end position="68"/>
    </location>
</feature>
<feature type="transmembrane region" description="Helical" evidence="2">
    <location>
        <begin position="69"/>
        <end position="89"/>
    </location>
</feature>
<feature type="topological domain" description="Cytoplasmic" evidence="2">
    <location>
        <begin position="90"/>
        <end position="118"/>
    </location>
</feature>
<feature type="transmembrane region" description="Helical" evidence="2">
    <location>
        <begin position="119"/>
        <end position="139"/>
    </location>
</feature>
<feature type="topological domain" description="Periplasmic" evidence="2">
    <location>
        <begin position="140"/>
        <end position="154"/>
    </location>
</feature>
<feature type="transmembrane region" description="Helical" evidence="2">
    <location>
        <begin position="155"/>
        <end position="175"/>
    </location>
</feature>
<feature type="topological domain" description="Cytoplasmic" evidence="2">
    <location>
        <begin position="176"/>
        <end position="196"/>
    </location>
</feature>
<feature type="transmembrane region" description="Helical" evidence="2">
    <location>
        <begin position="197"/>
        <end position="217"/>
    </location>
</feature>
<feature type="topological domain" description="Periplasmic" evidence="2">
    <location>
        <begin position="218"/>
        <end position="221"/>
    </location>
</feature>
<sequence length="221" mass="23616">MLDLFKAIGLGLVVLLPLANPLTTVALFLGLAGNMNSAERNRQSLMASVYVFAIMMVAYYAGQLVMDTFGISIPGLRIAGGLIVAFIGFRMLFPQQKAIDSPEAKSKSKELEDEPSANIAFVPLAMPSTAGPGTIAMIISSASTVRQSSTFADWVLMVAPPLIFFLVAVILWGSLRSSGAIMRLVGKGGIEAISRLMGFLLVCMGVQFIINGILEIIKTYH</sequence>
<proteinExistence type="inferred from homology"/>
<gene>
    <name type="primary">marC</name>
    <name type="ordered locus">EcSMS35_1641</name>
</gene>
<comment type="subcellular location">
    <subcellularLocation>
        <location evidence="1">Cell inner membrane</location>
        <topology evidence="1">Multi-pass membrane protein</topology>
    </subcellularLocation>
</comment>
<comment type="similarity">
    <text evidence="3">Belongs to the UPF0056 (MarC) family.</text>
</comment>
<accession>B1LF84</accession>
<protein>
    <recommendedName>
        <fullName>UPF0056 inner membrane protein MarC</fullName>
    </recommendedName>
</protein>
<name>MARC_ECOSM</name>
<reference key="1">
    <citation type="journal article" date="2008" name="J. Bacteriol.">
        <title>Insights into the environmental resistance gene pool from the genome sequence of the multidrug-resistant environmental isolate Escherichia coli SMS-3-5.</title>
        <authorList>
            <person name="Fricke W.F."/>
            <person name="Wright M.S."/>
            <person name="Lindell A.H."/>
            <person name="Harkins D.M."/>
            <person name="Baker-Austin C."/>
            <person name="Ravel J."/>
            <person name="Stepanauskas R."/>
        </authorList>
    </citation>
    <scope>NUCLEOTIDE SEQUENCE [LARGE SCALE GENOMIC DNA]</scope>
    <source>
        <strain>SMS-3-5 / SECEC</strain>
    </source>
</reference>
<organism>
    <name type="scientific">Escherichia coli (strain SMS-3-5 / SECEC)</name>
    <dbReference type="NCBI Taxonomy" id="439855"/>
    <lineage>
        <taxon>Bacteria</taxon>
        <taxon>Pseudomonadati</taxon>
        <taxon>Pseudomonadota</taxon>
        <taxon>Gammaproteobacteria</taxon>
        <taxon>Enterobacterales</taxon>
        <taxon>Enterobacteriaceae</taxon>
        <taxon>Escherichia</taxon>
    </lineage>
</organism>
<keyword id="KW-0997">Cell inner membrane</keyword>
<keyword id="KW-1003">Cell membrane</keyword>
<keyword id="KW-0472">Membrane</keyword>
<keyword id="KW-0812">Transmembrane</keyword>
<keyword id="KW-1133">Transmembrane helix</keyword>
<dbReference type="EMBL" id="CP000970">
    <property type="protein sequence ID" value="ACB16185.1"/>
    <property type="molecule type" value="Genomic_DNA"/>
</dbReference>
<dbReference type="RefSeq" id="WP_000885035.1">
    <property type="nucleotide sequence ID" value="NC_010498.1"/>
</dbReference>
<dbReference type="KEGG" id="ecm:EcSMS35_1641"/>
<dbReference type="HOGENOM" id="CLU_079909_2_0_6"/>
<dbReference type="Proteomes" id="UP000007011">
    <property type="component" value="Chromosome"/>
</dbReference>
<dbReference type="GO" id="GO:0005886">
    <property type="term" value="C:plasma membrane"/>
    <property type="evidence" value="ECO:0007669"/>
    <property type="project" value="UniProtKB-SubCell"/>
</dbReference>
<dbReference type="InterPro" id="IPR002771">
    <property type="entry name" value="Multi_antbiot-R_MarC"/>
</dbReference>
<dbReference type="NCBIfam" id="TIGR00427">
    <property type="entry name" value="NAAT family transporter"/>
    <property type="match status" value="1"/>
</dbReference>
<dbReference type="NCBIfam" id="NF008228">
    <property type="entry name" value="PRK10995.1"/>
    <property type="match status" value="1"/>
</dbReference>
<dbReference type="PANTHER" id="PTHR33508:SF2">
    <property type="entry name" value="UPF0056 INNER MEMBRANE PROTEIN MARC"/>
    <property type="match status" value="1"/>
</dbReference>
<dbReference type="PANTHER" id="PTHR33508">
    <property type="entry name" value="UPF0056 MEMBRANE PROTEIN YHCE"/>
    <property type="match status" value="1"/>
</dbReference>
<dbReference type="Pfam" id="PF01914">
    <property type="entry name" value="MarC"/>
    <property type="match status" value="1"/>
</dbReference>
<evidence type="ECO:0000250" key="1"/>
<evidence type="ECO:0000255" key="2"/>
<evidence type="ECO:0000305" key="3"/>